<accession>Q9SV12</accession>
<accession>C0Z2D2</accession>
<organism>
    <name type="scientific">Arabidopsis thaliana</name>
    <name type="common">Mouse-ear cress</name>
    <dbReference type="NCBI Taxonomy" id="3702"/>
    <lineage>
        <taxon>Eukaryota</taxon>
        <taxon>Viridiplantae</taxon>
        <taxon>Streptophyta</taxon>
        <taxon>Embryophyta</taxon>
        <taxon>Tracheophyta</taxon>
        <taxon>Spermatophyta</taxon>
        <taxon>Magnoliopsida</taxon>
        <taxon>eudicotyledons</taxon>
        <taxon>Gunneridae</taxon>
        <taxon>Pentapetalae</taxon>
        <taxon>rosids</taxon>
        <taxon>malvids</taxon>
        <taxon>Brassicales</taxon>
        <taxon>Brassicaceae</taxon>
        <taxon>Camelineae</taxon>
        <taxon>Arabidopsis</taxon>
    </lineage>
</organism>
<comment type="function">
    <text>Transcriptional activator that specifically binds DNA sequence 5'-AGAAnnTTCT-3' known as heat shock promoter elements (HSE).</text>
</comment>
<comment type="subunit">
    <text evidence="1">Homotrimer.</text>
</comment>
<comment type="interaction">
    <interactant intactId="EBI-15200882">
        <id>Q9SV12</id>
    </interactant>
    <interactant intactId="EBI-4457746">
        <id>Q9LV52</id>
        <label>HSFC1</label>
    </interactant>
    <organismsDiffer>false</organismsDiffer>
    <experiments>4</experiments>
</comment>
<comment type="subcellular location">
    <subcellularLocation>
        <location evidence="6">Nucleus</location>
    </subcellularLocation>
</comment>
<comment type="alternative products">
    <event type="alternative splicing"/>
    <isoform>
        <id>Q9SV12-1</id>
        <name>1</name>
        <sequence type="displayed"/>
    </isoform>
    <isoform>
        <id>Q9SV12-2</id>
        <name>2</name>
        <sequence type="described" ref="VSP_037988 VSP_037989"/>
    </isoform>
</comment>
<comment type="domain">
    <text evidence="4">The hydrophobic-rich region (HR-A/B) corresponds to the oligomerization domain. AHA motif is a transcriptional activator element.</text>
</comment>
<comment type="PTM">
    <text evidence="1">Exhibits temperature-dependent phosphorylation.</text>
</comment>
<comment type="similarity">
    <text evidence="6">Belongs to the HSF family. Class A subfamily.</text>
</comment>
<name>HFA7A_ARATH</name>
<dbReference type="EMBL" id="AL049711">
    <property type="protein sequence ID" value="CAB41311.1"/>
    <property type="molecule type" value="Genomic_DNA"/>
</dbReference>
<dbReference type="EMBL" id="CP002686">
    <property type="protein sequence ID" value="AEE78861.1"/>
    <property type="molecule type" value="Genomic_DNA"/>
</dbReference>
<dbReference type="EMBL" id="AK318746">
    <property type="protein sequence ID" value="BAH56861.1"/>
    <property type="molecule type" value="mRNA"/>
</dbReference>
<dbReference type="PIR" id="T49070">
    <property type="entry name" value="T49070"/>
</dbReference>
<dbReference type="RefSeq" id="NP_190759.1">
    <molecule id="Q9SV12-1"/>
    <property type="nucleotide sequence ID" value="NM_115050.2"/>
</dbReference>
<dbReference type="SMR" id="Q9SV12"/>
<dbReference type="BioGRID" id="9672">
    <property type="interactions" value="6"/>
</dbReference>
<dbReference type="FunCoup" id="Q9SV12">
    <property type="interactions" value="754"/>
</dbReference>
<dbReference type="IntAct" id="Q9SV12">
    <property type="interactions" value="7"/>
</dbReference>
<dbReference type="STRING" id="3702.Q9SV12"/>
<dbReference type="PaxDb" id="3702-AT3G51910.1"/>
<dbReference type="ProteomicsDB" id="230275">
    <molecule id="Q9SV12-1"/>
</dbReference>
<dbReference type="EnsemblPlants" id="AT3G51910.1">
    <molecule id="Q9SV12-1"/>
    <property type="protein sequence ID" value="AT3G51910.1"/>
    <property type="gene ID" value="AT3G51910"/>
</dbReference>
<dbReference type="GeneID" id="824354"/>
<dbReference type="Gramene" id="AT3G51910.1">
    <molecule id="Q9SV12-1"/>
    <property type="protein sequence ID" value="AT3G51910.1"/>
    <property type="gene ID" value="AT3G51910"/>
</dbReference>
<dbReference type="KEGG" id="ath:AT3G51910"/>
<dbReference type="Araport" id="AT3G51910"/>
<dbReference type="TAIR" id="AT3G51910">
    <property type="gene designation" value="HSFA7A"/>
</dbReference>
<dbReference type="eggNOG" id="KOG0627">
    <property type="taxonomic scope" value="Eukaryota"/>
</dbReference>
<dbReference type="HOGENOM" id="CLU_030308_1_0_1"/>
<dbReference type="InParanoid" id="Q9SV12"/>
<dbReference type="OMA" id="QSTKANM"/>
<dbReference type="OrthoDB" id="60033at2759"/>
<dbReference type="PhylomeDB" id="Q9SV12"/>
<dbReference type="PRO" id="PR:Q9SV12"/>
<dbReference type="Proteomes" id="UP000006548">
    <property type="component" value="Chromosome 3"/>
</dbReference>
<dbReference type="ExpressionAtlas" id="Q9SV12">
    <property type="expression patterns" value="baseline and differential"/>
</dbReference>
<dbReference type="GO" id="GO:0005634">
    <property type="term" value="C:nucleus"/>
    <property type="evidence" value="ECO:0007669"/>
    <property type="project" value="UniProtKB-SubCell"/>
</dbReference>
<dbReference type="GO" id="GO:0003700">
    <property type="term" value="F:DNA-binding transcription factor activity"/>
    <property type="evidence" value="ECO:0000250"/>
    <property type="project" value="TAIR"/>
</dbReference>
<dbReference type="GO" id="GO:0000976">
    <property type="term" value="F:transcription cis-regulatory region binding"/>
    <property type="evidence" value="ECO:0000353"/>
    <property type="project" value="TAIR"/>
</dbReference>
<dbReference type="GO" id="GO:0009408">
    <property type="term" value="P:response to heat"/>
    <property type="evidence" value="ECO:0000270"/>
    <property type="project" value="TAIR"/>
</dbReference>
<dbReference type="FunFam" id="1.10.10.10:FF:000367">
    <property type="entry name" value="Heat stress transcription factor A-8"/>
    <property type="match status" value="1"/>
</dbReference>
<dbReference type="Gene3D" id="1.10.10.10">
    <property type="entry name" value="Winged helix-like DNA-binding domain superfamily/Winged helix DNA-binding domain"/>
    <property type="match status" value="1"/>
</dbReference>
<dbReference type="InterPro" id="IPR000232">
    <property type="entry name" value="HSF_DNA-bd"/>
</dbReference>
<dbReference type="InterPro" id="IPR036388">
    <property type="entry name" value="WH-like_DNA-bd_sf"/>
</dbReference>
<dbReference type="InterPro" id="IPR036390">
    <property type="entry name" value="WH_DNA-bd_sf"/>
</dbReference>
<dbReference type="PANTHER" id="PTHR10015">
    <property type="entry name" value="HEAT SHOCK TRANSCRIPTION FACTOR"/>
    <property type="match status" value="1"/>
</dbReference>
<dbReference type="PANTHER" id="PTHR10015:SF322">
    <property type="entry name" value="HEAT STRESS TRANSCRIPTION FACTOR A-7A"/>
    <property type="match status" value="1"/>
</dbReference>
<dbReference type="Pfam" id="PF00447">
    <property type="entry name" value="HSF_DNA-bind"/>
    <property type="match status" value="1"/>
</dbReference>
<dbReference type="PRINTS" id="PR00056">
    <property type="entry name" value="HSFDOMAIN"/>
</dbReference>
<dbReference type="SMART" id="SM00415">
    <property type="entry name" value="HSF"/>
    <property type="match status" value="1"/>
</dbReference>
<dbReference type="SUPFAM" id="SSF46785">
    <property type="entry name" value="Winged helix' DNA-binding domain"/>
    <property type="match status" value="1"/>
</dbReference>
<dbReference type="PROSITE" id="PS00434">
    <property type="entry name" value="HSF_DOMAIN"/>
    <property type="match status" value="1"/>
</dbReference>
<reference key="1">
    <citation type="journal article" date="2000" name="Nature">
        <title>Sequence and analysis of chromosome 3 of the plant Arabidopsis thaliana.</title>
        <authorList>
            <person name="Salanoubat M."/>
            <person name="Lemcke K."/>
            <person name="Rieger M."/>
            <person name="Ansorge W."/>
            <person name="Unseld M."/>
            <person name="Fartmann B."/>
            <person name="Valle G."/>
            <person name="Bloecker H."/>
            <person name="Perez-Alonso M."/>
            <person name="Obermaier B."/>
            <person name="Delseny M."/>
            <person name="Boutry M."/>
            <person name="Grivell L.A."/>
            <person name="Mache R."/>
            <person name="Puigdomenech P."/>
            <person name="De Simone V."/>
            <person name="Choisne N."/>
            <person name="Artiguenave F."/>
            <person name="Robert C."/>
            <person name="Brottier P."/>
            <person name="Wincker P."/>
            <person name="Cattolico L."/>
            <person name="Weissenbach J."/>
            <person name="Saurin W."/>
            <person name="Quetier F."/>
            <person name="Schaefer M."/>
            <person name="Mueller-Auer S."/>
            <person name="Gabel C."/>
            <person name="Fuchs M."/>
            <person name="Benes V."/>
            <person name="Wurmbach E."/>
            <person name="Drzonek H."/>
            <person name="Erfle H."/>
            <person name="Jordan N."/>
            <person name="Bangert S."/>
            <person name="Wiedelmann R."/>
            <person name="Kranz H."/>
            <person name="Voss H."/>
            <person name="Holland R."/>
            <person name="Brandt P."/>
            <person name="Nyakatura G."/>
            <person name="Vezzi A."/>
            <person name="D'Angelo M."/>
            <person name="Pallavicini A."/>
            <person name="Toppo S."/>
            <person name="Simionati B."/>
            <person name="Conrad A."/>
            <person name="Hornischer K."/>
            <person name="Kauer G."/>
            <person name="Loehnert T.-H."/>
            <person name="Nordsiek G."/>
            <person name="Reichelt J."/>
            <person name="Scharfe M."/>
            <person name="Schoen O."/>
            <person name="Bargues M."/>
            <person name="Terol J."/>
            <person name="Climent J."/>
            <person name="Navarro P."/>
            <person name="Collado C."/>
            <person name="Perez-Perez A."/>
            <person name="Ottenwaelder B."/>
            <person name="Duchemin D."/>
            <person name="Cooke R."/>
            <person name="Laudie M."/>
            <person name="Berger-Llauro C."/>
            <person name="Purnelle B."/>
            <person name="Masuy D."/>
            <person name="de Haan M."/>
            <person name="Maarse A.C."/>
            <person name="Alcaraz J.-P."/>
            <person name="Cottet A."/>
            <person name="Casacuberta E."/>
            <person name="Monfort A."/>
            <person name="Argiriou A."/>
            <person name="Flores M."/>
            <person name="Liguori R."/>
            <person name="Vitale D."/>
            <person name="Mannhaupt G."/>
            <person name="Haase D."/>
            <person name="Schoof H."/>
            <person name="Rudd S."/>
            <person name="Zaccaria P."/>
            <person name="Mewes H.-W."/>
            <person name="Mayer K.F.X."/>
            <person name="Kaul S."/>
            <person name="Town C.D."/>
            <person name="Koo H.L."/>
            <person name="Tallon L.J."/>
            <person name="Jenkins J."/>
            <person name="Rooney T."/>
            <person name="Rizzo M."/>
            <person name="Walts A."/>
            <person name="Utterback T."/>
            <person name="Fujii C.Y."/>
            <person name="Shea T.P."/>
            <person name="Creasy T.H."/>
            <person name="Haas B."/>
            <person name="Maiti R."/>
            <person name="Wu D."/>
            <person name="Peterson J."/>
            <person name="Van Aken S."/>
            <person name="Pai G."/>
            <person name="Militscher J."/>
            <person name="Sellers P."/>
            <person name="Gill J.E."/>
            <person name="Feldblyum T.V."/>
            <person name="Preuss D."/>
            <person name="Lin X."/>
            <person name="Nierman W.C."/>
            <person name="Salzberg S.L."/>
            <person name="White O."/>
            <person name="Venter J.C."/>
            <person name="Fraser C.M."/>
            <person name="Kaneko T."/>
            <person name="Nakamura Y."/>
            <person name="Sato S."/>
            <person name="Kato T."/>
            <person name="Asamizu E."/>
            <person name="Sasamoto S."/>
            <person name="Kimura T."/>
            <person name="Idesawa K."/>
            <person name="Kawashima K."/>
            <person name="Kishida Y."/>
            <person name="Kiyokawa C."/>
            <person name="Kohara M."/>
            <person name="Matsumoto M."/>
            <person name="Matsuno A."/>
            <person name="Muraki A."/>
            <person name="Nakayama S."/>
            <person name="Nakazaki N."/>
            <person name="Shinpo S."/>
            <person name="Takeuchi C."/>
            <person name="Wada T."/>
            <person name="Watanabe A."/>
            <person name="Yamada M."/>
            <person name="Yasuda M."/>
            <person name="Tabata S."/>
        </authorList>
    </citation>
    <scope>NUCLEOTIDE SEQUENCE [LARGE SCALE GENOMIC DNA]</scope>
    <source>
        <strain>cv. Columbia</strain>
    </source>
</reference>
<reference key="2">
    <citation type="journal article" date="2017" name="Plant J.">
        <title>Araport11: a complete reannotation of the Arabidopsis thaliana reference genome.</title>
        <authorList>
            <person name="Cheng C.Y."/>
            <person name="Krishnakumar V."/>
            <person name="Chan A.P."/>
            <person name="Thibaud-Nissen F."/>
            <person name="Schobel S."/>
            <person name="Town C.D."/>
        </authorList>
    </citation>
    <scope>GENOME REANNOTATION</scope>
    <source>
        <strain>cv. Columbia</strain>
    </source>
</reference>
<reference key="3">
    <citation type="journal article" date="2009" name="DNA Res.">
        <title>Analysis of multiple occurrences of alternative splicing events in Arabidopsis thaliana using novel sequenced full-length cDNAs.</title>
        <authorList>
            <person name="Iida K."/>
            <person name="Fukami-Kobayashi K."/>
            <person name="Toyoda A."/>
            <person name="Sakaki Y."/>
            <person name="Kobayashi M."/>
            <person name="Seki M."/>
            <person name="Shinozaki K."/>
        </authorList>
    </citation>
    <scope>NUCLEOTIDE SEQUENCE [LARGE SCALE MRNA] (ISOFORM 2)</scope>
    <source>
        <strain>cv. Columbia</strain>
    </source>
</reference>
<reference key="4">
    <citation type="journal article" date="2001" name="Cell Stress Chaperones">
        <title>Arabidopsis and the heat stress transcription factor world: how many heat stress transcription factors do we need?</title>
        <authorList>
            <person name="Nover L."/>
            <person name="Bharti K."/>
            <person name="Doering P."/>
            <person name="Mishra S.K."/>
            <person name="Ganguli A."/>
            <person name="Scharf K.-D."/>
        </authorList>
    </citation>
    <scope>GENE FAMILY</scope>
    <scope>NOMENCLATURE</scope>
    <scope>DOMAIN AHA</scope>
</reference>
<reference key="5">
    <citation type="journal article" date="2008" name="J. Genet. Genomics">
        <title>Genome-wide analysis of heat shock transcription factor families in rice and Arabidopsis.</title>
        <authorList>
            <person name="Guo J."/>
            <person name="Wu J."/>
            <person name="Ji Q."/>
            <person name="Wang C."/>
            <person name="Luo L."/>
            <person name="Yuan Y."/>
            <person name="Wang Y."/>
            <person name="Wang J."/>
        </authorList>
    </citation>
    <scope>GENE FAMILY</scope>
    <scope>NOMENCLATURE</scope>
</reference>
<evidence type="ECO:0000250" key="1"/>
<evidence type="ECO:0000255" key="2"/>
<evidence type="ECO:0000256" key="3">
    <source>
        <dbReference type="SAM" id="MobiDB-lite"/>
    </source>
</evidence>
<evidence type="ECO:0000269" key="4">
    <source>
    </source>
</evidence>
<evidence type="ECO:0000303" key="5">
    <source>
    </source>
</evidence>
<evidence type="ECO:0000305" key="6"/>
<gene>
    <name type="primary">HSFA7A</name>
    <name type="synonym">HSF09</name>
    <name type="ordered locus">At3g51910</name>
    <name type="ORF">F4F15.20</name>
</gene>
<sequence length="272" mass="31776">MMNPFLPEGCDPPPPPQPMEGLHENAPPPFLTKTFEMVDDPNTDHIVSWNRGGTSFVVWDLHSFSTILLPRHFKHSNFSSFIRQLNTYGFRKIEAERWEFANEEFLLGQRQLLKNIKRRNPFTPSSSPSHDACNELRREKQVLMMEIVSLRQQQQTTKSYIKAMEQRIEGTERKQRQMMSFLARAMQSPSFLHQLLKQRDKKIKELEDNESAKRKRGSSSMSELEVLALEMQGHGKQRNMLEEEDHQLVVERELDDGFWEELLSDESLASTS</sequence>
<proteinExistence type="evidence at protein level"/>
<protein>
    <recommendedName>
        <fullName>Heat stress transcription factor A-7a</fullName>
        <shortName>AtHsfA7a</shortName>
    </recommendedName>
    <alternativeName>
        <fullName>AtHsf-09</fullName>
    </alternativeName>
</protein>
<keyword id="KW-0010">Activator</keyword>
<keyword id="KW-0025">Alternative splicing</keyword>
<keyword id="KW-0238">DNA-binding</keyword>
<keyword id="KW-0539">Nucleus</keyword>
<keyword id="KW-0597">Phosphoprotein</keyword>
<keyword id="KW-1185">Reference proteome</keyword>
<keyword id="KW-0346">Stress response</keyword>
<keyword id="KW-0804">Transcription</keyword>
<keyword id="KW-0805">Transcription regulation</keyword>
<feature type="chain" id="PRO_0000270809" description="Heat stress transcription factor A-7a">
    <location>
        <begin position="1"/>
        <end position="272"/>
    </location>
</feature>
<feature type="DNA-binding region" evidence="1">
    <location>
        <begin position="27"/>
        <end position="121"/>
    </location>
</feature>
<feature type="region of interest" description="Disordered" evidence="3">
    <location>
        <begin position="1"/>
        <end position="26"/>
    </location>
</feature>
<feature type="region of interest" description="Hydrophobic repeat HR-A/B">
    <location>
        <begin position="132"/>
        <end position="186"/>
    </location>
</feature>
<feature type="region of interest" description="Disordered" evidence="3">
    <location>
        <begin position="203"/>
        <end position="223"/>
    </location>
</feature>
<feature type="short sequence motif" description="Bipartite nuclear localization signal" evidence="2">
    <location>
        <begin position="201"/>
        <end position="216"/>
    </location>
</feature>
<feature type="short sequence motif" description="AHA">
    <location>
        <begin position="256"/>
        <end position="265"/>
    </location>
</feature>
<feature type="compositionally biased region" description="Basic and acidic residues" evidence="3">
    <location>
        <begin position="203"/>
        <end position="212"/>
    </location>
</feature>
<feature type="splice variant" id="VSP_037988" description="In isoform 2." evidence="5">
    <location>
        <begin position="1"/>
        <end position="82"/>
    </location>
</feature>
<feature type="splice variant" id="VSP_037989" description="In isoform 2." evidence="5">
    <original>RQLNTY</original>
    <variation>MLKKLQ</variation>
    <location>
        <begin position="83"/>
        <end position="88"/>
    </location>
</feature>
<feature type="sequence conflict" description="In Ref. 3; BAH56861." evidence="6" ref="3">
    <original>R</original>
    <variation>G</variation>
    <location>
        <position position="184"/>
    </location>
</feature>